<accession>Q7MLT5</accession>
<reference key="1">
    <citation type="journal article" date="2003" name="Genome Res.">
        <title>Comparative genome analysis of Vibrio vulnificus, a marine pathogen.</title>
        <authorList>
            <person name="Chen C.-Y."/>
            <person name="Wu K.-M."/>
            <person name="Chang Y.-C."/>
            <person name="Chang C.-H."/>
            <person name="Tsai H.-C."/>
            <person name="Liao T.-L."/>
            <person name="Liu Y.-M."/>
            <person name="Chen H.-J."/>
            <person name="Shen A.B.-T."/>
            <person name="Li J.-C."/>
            <person name="Su T.-L."/>
            <person name="Shao C.-P."/>
            <person name="Lee C.-T."/>
            <person name="Hor L.-I."/>
            <person name="Tsai S.-F."/>
        </authorList>
    </citation>
    <scope>NUCLEOTIDE SEQUENCE [LARGE SCALE GENOMIC DNA]</scope>
    <source>
        <strain>YJ016</strain>
    </source>
</reference>
<proteinExistence type="inferred from homology"/>
<dbReference type="EMBL" id="BA000037">
    <property type="protein sequence ID" value="BAC94106.1"/>
    <property type="status" value="ALT_INIT"/>
    <property type="molecule type" value="Genomic_DNA"/>
</dbReference>
<dbReference type="RefSeq" id="WP_011080746.1">
    <property type="nucleotide sequence ID" value="NC_005139.1"/>
</dbReference>
<dbReference type="SMR" id="Q7MLT5"/>
<dbReference type="STRING" id="672.VV93_v1c12560"/>
<dbReference type="GeneID" id="93894159"/>
<dbReference type="KEGG" id="vvy:VV1342"/>
<dbReference type="eggNOG" id="COG2915">
    <property type="taxonomic scope" value="Bacteria"/>
</dbReference>
<dbReference type="HOGENOM" id="CLU_098920_0_0_6"/>
<dbReference type="Proteomes" id="UP000002675">
    <property type="component" value="Chromosome I"/>
</dbReference>
<dbReference type="GO" id="GO:0005737">
    <property type="term" value="C:cytoplasm"/>
    <property type="evidence" value="ECO:0007669"/>
    <property type="project" value="UniProtKB-SubCell"/>
</dbReference>
<dbReference type="GO" id="GO:0005886">
    <property type="term" value="C:plasma membrane"/>
    <property type="evidence" value="ECO:0007669"/>
    <property type="project" value="UniProtKB-SubCell"/>
</dbReference>
<dbReference type="Gene3D" id="1.10.3890.10">
    <property type="entry name" value="HflD-like"/>
    <property type="match status" value="1"/>
</dbReference>
<dbReference type="HAMAP" id="MF_00695">
    <property type="entry name" value="HflD_protein"/>
    <property type="match status" value="1"/>
</dbReference>
<dbReference type="InterPro" id="IPR007451">
    <property type="entry name" value="HflD"/>
</dbReference>
<dbReference type="InterPro" id="IPR035932">
    <property type="entry name" value="HflD-like_sf"/>
</dbReference>
<dbReference type="NCBIfam" id="NF001246">
    <property type="entry name" value="PRK00218.1-2"/>
    <property type="match status" value="1"/>
</dbReference>
<dbReference type="NCBIfam" id="NF001248">
    <property type="entry name" value="PRK00218.1-4"/>
    <property type="match status" value="1"/>
</dbReference>
<dbReference type="PANTHER" id="PTHR38100">
    <property type="entry name" value="HIGH FREQUENCY LYSOGENIZATION PROTEIN HFLD"/>
    <property type="match status" value="1"/>
</dbReference>
<dbReference type="PANTHER" id="PTHR38100:SF1">
    <property type="entry name" value="HIGH FREQUENCY LYSOGENIZATION PROTEIN HFLD"/>
    <property type="match status" value="1"/>
</dbReference>
<dbReference type="Pfam" id="PF04356">
    <property type="entry name" value="DUF489"/>
    <property type="match status" value="1"/>
</dbReference>
<dbReference type="SUPFAM" id="SSF101322">
    <property type="entry name" value="YcfC-like"/>
    <property type="match status" value="1"/>
</dbReference>
<organism>
    <name type="scientific">Vibrio vulnificus (strain YJ016)</name>
    <dbReference type="NCBI Taxonomy" id="196600"/>
    <lineage>
        <taxon>Bacteria</taxon>
        <taxon>Pseudomonadati</taxon>
        <taxon>Pseudomonadota</taxon>
        <taxon>Gammaproteobacteria</taxon>
        <taxon>Vibrionales</taxon>
        <taxon>Vibrionaceae</taxon>
        <taxon>Vibrio</taxon>
    </lineage>
</organism>
<keyword id="KW-0997">Cell inner membrane</keyword>
<keyword id="KW-1003">Cell membrane</keyword>
<keyword id="KW-0963">Cytoplasm</keyword>
<keyword id="KW-0472">Membrane</keyword>
<feature type="chain" id="PRO_0000071593" description="High frequency lysogenization protein HflD homolog">
    <location>
        <begin position="1"/>
        <end position="205"/>
    </location>
</feature>
<sequence>MANTLYDRTIAFAGMCQAVALVQQIARNGHCDQDAFETSIKAILNTNPANTLDVFGNESQLKLGLECLVKGIDSTPTGSEVTRYLISLMALERKLMGRNDAMSQLGDRIQMVQRQTEHYDLFEEQMISNVASIYLDVISPIGPRIQVTGTPTVLQQTSNQHKVRALLLSGIRSAVLWRQVGGRRRHLIFGRKKMVEQAQILLARM</sequence>
<gene>
    <name evidence="1" type="primary">hflD</name>
    <name type="ordered locus">VV1342</name>
</gene>
<comment type="subcellular location">
    <subcellularLocation>
        <location>Cytoplasm</location>
    </subcellularLocation>
    <subcellularLocation>
        <location evidence="1">Cell inner membrane</location>
        <topology evidence="1">Peripheral membrane protein</topology>
        <orientation evidence="1">Cytoplasmic side</orientation>
    </subcellularLocation>
</comment>
<comment type="similarity">
    <text evidence="1">Belongs to the HflD family.</text>
</comment>
<comment type="sequence caution" evidence="2">
    <conflict type="erroneous initiation">
        <sequence resource="EMBL-CDS" id="BAC94106"/>
    </conflict>
</comment>
<name>HFLD_VIBVY</name>
<protein>
    <recommendedName>
        <fullName evidence="1">High frequency lysogenization protein HflD homolog</fullName>
    </recommendedName>
</protein>
<evidence type="ECO:0000255" key="1">
    <source>
        <dbReference type="HAMAP-Rule" id="MF_00695"/>
    </source>
</evidence>
<evidence type="ECO:0000305" key="2"/>